<protein>
    <recommendedName>
        <fullName>F-box/kelch-repeat protein At5g42360</fullName>
    </recommendedName>
</protein>
<gene>
    <name type="ordered locus">At5g42360</name>
    <name type="ORF">MDH9.5</name>
</gene>
<sequence length="563" mass="64851">MMISEKPLGEESIRQDLEVLTVSRRLVKSVSQKLKKKIHKTEVVEDEEVARGAVNCLSISVGCRVADTGEDFEEDLSNKRWSSASEDGKGLMTICGTEEIRLDCFSYGVRERFWKKNNRRYLADSGQDYRKHVYLPDDILEMCLMRLPLTSLLNAHLVCKKWQSMANTQRFLQMRREGSFQTPWLFLFAALKDGCSSGDIHGYDVSQDKWHRIETDLLKGRFMYSVTSIHEEIYIVGGRSMDRNSFKSHRGILVFSPSIKAWRKIASMRHARSLPIVGATEVTSEFSTMQTKQNRQDRRFHLSRVGGESDVYEDPHRLSVRRQNRNSADQNGTKSHRLIRQKLDRLNRNSSKRFVLIAIGGTGIFDEPLDSGEIYDSATNTWSEMQRLPMGFGVVSCGIICNGIFYAYSENDKLSGYDIERGFWITIQTSPIPPRVHEFYPKLVSCNHRLFMLSVSWCDEGDGQIGRRNKAVRKLWELDLVYLTWTEVSVHPDAPMDWNATYVSDQNILMGVEMFKIFGQVLSFFTVCDILTEEASWRHVSRNQRNQKLNLSCMNKTIALLHL</sequence>
<organism>
    <name type="scientific">Arabidopsis thaliana</name>
    <name type="common">Mouse-ear cress</name>
    <dbReference type="NCBI Taxonomy" id="3702"/>
    <lineage>
        <taxon>Eukaryota</taxon>
        <taxon>Viridiplantae</taxon>
        <taxon>Streptophyta</taxon>
        <taxon>Embryophyta</taxon>
        <taxon>Tracheophyta</taxon>
        <taxon>Spermatophyta</taxon>
        <taxon>Magnoliopsida</taxon>
        <taxon>eudicotyledons</taxon>
        <taxon>Gunneridae</taxon>
        <taxon>Pentapetalae</taxon>
        <taxon>rosids</taxon>
        <taxon>malvids</taxon>
        <taxon>Brassicales</taxon>
        <taxon>Brassicaceae</taxon>
        <taxon>Camelineae</taxon>
        <taxon>Arabidopsis</taxon>
    </lineage>
</organism>
<feature type="chain" id="PRO_0000283273" description="F-box/kelch-repeat protein At5g42360">
    <location>
        <begin position="1"/>
        <end position="563"/>
    </location>
</feature>
<feature type="domain" description="F-box" evidence="1">
    <location>
        <begin position="129"/>
        <end position="175"/>
    </location>
</feature>
<feature type="repeat" description="Kelch 1">
    <location>
        <begin position="184"/>
        <end position="231"/>
    </location>
</feature>
<feature type="repeat" description="Kelch 2">
    <location>
        <begin position="232"/>
        <end position="282"/>
    </location>
</feature>
<feature type="repeat" description="Kelch 3">
    <location>
        <begin position="355"/>
        <end position="402"/>
    </location>
</feature>
<feature type="sequence conflict" description="In Ref. 4; AAM63784." evidence="2" ref="4">
    <location>
        <position position="2"/>
    </location>
</feature>
<feature type="sequence conflict" description="In Ref. 4; AAM63784." evidence="2" ref="4">
    <original>D</original>
    <variation>E</variation>
    <location>
        <position position="87"/>
    </location>
</feature>
<feature type="sequence conflict" description="In Ref. 4; AAM63784." evidence="2" ref="4">
    <original>K</original>
    <variation>N</variation>
    <location>
        <position position="116"/>
    </location>
</feature>
<feature type="sequence conflict" description="In Ref. 4; AAM63784." evidence="2" ref="4">
    <original>S</original>
    <variation>L</variation>
    <location>
        <position position="125"/>
    </location>
</feature>
<feature type="sequence conflict" description="In Ref. 4; AAM63784." evidence="2" ref="4">
    <original>I</original>
    <variation>L</variation>
    <location>
        <position position="364"/>
    </location>
</feature>
<feature type="sequence conflict" description="In Ref. 4; AAM63784." evidence="2" ref="4">
    <original>V</original>
    <variation>I</variation>
    <location>
        <position position="512"/>
    </location>
</feature>
<feature type="sequence conflict" description="In Ref. 4; AAM63784." evidence="2" ref="4">
    <original>I</original>
    <variation>V</variation>
    <location>
        <position position="530"/>
    </location>
</feature>
<feature type="sequence conflict" description="In Ref. 4; AAM63784." evidence="2" ref="4">
    <original>N</original>
    <variation>S</variation>
    <location>
        <position position="546"/>
    </location>
</feature>
<feature type="sequence conflict" description="In Ref. 4; AAM63784." evidence="2" ref="4">
    <original>M</original>
    <variation>T</variation>
    <location>
        <position position="554"/>
    </location>
</feature>
<proteinExistence type="evidence at transcript level"/>
<evidence type="ECO:0000255" key="1">
    <source>
        <dbReference type="PROSITE-ProRule" id="PRU00080"/>
    </source>
</evidence>
<evidence type="ECO:0000305" key="2"/>
<name>FK118_ARATH</name>
<reference key="1">
    <citation type="journal article" date="1998" name="DNA Res.">
        <title>Structural analysis of Arabidopsis thaliana chromosome 5. VIII. Sequence features of the regions of 1,081,958 bp covered by seventeen physically assigned P1 and TAC clones.</title>
        <authorList>
            <person name="Asamizu E."/>
            <person name="Sato S."/>
            <person name="Kaneko T."/>
            <person name="Nakamura Y."/>
            <person name="Kotani H."/>
            <person name="Miyajima N."/>
            <person name="Tabata S."/>
        </authorList>
    </citation>
    <scope>NUCLEOTIDE SEQUENCE [LARGE SCALE GENOMIC DNA]</scope>
    <source>
        <strain>cv. Columbia</strain>
    </source>
</reference>
<reference key="2">
    <citation type="journal article" date="2017" name="Plant J.">
        <title>Araport11: a complete reannotation of the Arabidopsis thaliana reference genome.</title>
        <authorList>
            <person name="Cheng C.Y."/>
            <person name="Krishnakumar V."/>
            <person name="Chan A.P."/>
            <person name="Thibaud-Nissen F."/>
            <person name="Schobel S."/>
            <person name="Town C.D."/>
        </authorList>
    </citation>
    <scope>GENOME REANNOTATION</scope>
    <source>
        <strain>cv. Columbia</strain>
    </source>
</reference>
<reference key="3">
    <citation type="journal article" date="2003" name="Science">
        <title>Empirical analysis of transcriptional activity in the Arabidopsis genome.</title>
        <authorList>
            <person name="Yamada K."/>
            <person name="Lim J."/>
            <person name="Dale J.M."/>
            <person name="Chen H."/>
            <person name="Shinn P."/>
            <person name="Palm C.J."/>
            <person name="Southwick A.M."/>
            <person name="Wu H.C."/>
            <person name="Kim C.J."/>
            <person name="Nguyen M."/>
            <person name="Pham P.K."/>
            <person name="Cheuk R.F."/>
            <person name="Karlin-Newmann G."/>
            <person name="Liu S.X."/>
            <person name="Lam B."/>
            <person name="Sakano H."/>
            <person name="Wu T."/>
            <person name="Yu G."/>
            <person name="Miranda M."/>
            <person name="Quach H.L."/>
            <person name="Tripp M."/>
            <person name="Chang C.H."/>
            <person name="Lee J.M."/>
            <person name="Toriumi M.J."/>
            <person name="Chan M.M."/>
            <person name="Tang C.C."/>
            <person name="Onodera C.S."/>
            <person name="Deng J.M."/>
            <person name="Akiyama K."/>
            <person name="Ansari Y."/>
            <person name="Arakawa T."/>
            <person name="Banh J."/>
            <person name="Banno F."/>
            <person name="Bowser L."/>
            <person name="Brooks S.Y."/>
            <person name="Carninci P."/>
            <person name="Chao Q."/>
            <person name="Choy N."/>
            <person name="Enju A."/>
            <person name="Goldsmith A.D."/>
            <person name="Gurjal M."/>
            <person name="Hansen N.F."/>
            <person name="Hayashizaki Y."/>
            <person name="Johnson-Hopson C."/>
            <person name="Hsuan V.W."/>
            <person name="Iida K."/>
            <person name="Karnes M."/>
            <person name="Khan S."/>
            <person name="Koesema E."/>
            <person name="Ishida J."/>
            <person name="Jiang P.X."/>
            <person name="Jones T."/>
            <person name="Kawai J."/>
            <person name="Kamiya A."/>
            <person name="Meyers C."/>
            <person name="Nakajima M."/>
            <person name="Narusaka M."/>
            <person name="Seki M."/>
            <person name="Sakurai T."/>
            <person name="Satou M."/>
            <person name="Tamse R."/>
            <person name="Vaysberg M."/>
            <person name="Wallender E.K."/>
            <person name="Wong C."/>
            <person name="Yamamura Y."/>
            <person name="Yuan S."/>
            <person name="Shinozaki K."/>
            <person name="Davis R.W."/>
            <person name="Theologis A."/>
            <person name="Ecker J.R."/>
        </authorList>
    </citation>
    <scope>NUCLEOTIDE SEQUENCE [LARGE SCALE MRNA]</scope>
    <source>
        <strain>cv. Columbia</strain>
    </source>
</reference>
<reference key="4">
    <citation type="submission" date="2002-03" db="EMBL/GenBank/DDBJ databases">
        <title>Full-length cDNA from Arabidopsis thaliana.</title>
        <authorList>
            <person name="Brover V.V."/>
            <person name="Troukhan M.E."/>
            <person name="Alexandrov N.A."/>
            <person name="Lu Y.-P."/>
            <person name="Flavell R.B."/>
            <person name="Feldmann K.A."/>
        </authorList>
    </citation>
    <scope>NUCLEOTIDE SEQUENCE [LARGE SCALE MRNA]</scope>
</reference>
<dbReference type="EMBL" id="AB016888">
    <property type="protein sequence ID" value="BAB10477.1"/>
    <property type="molecule type" value="Genomic_DNA"/>
</dbReference>
<dbReference type="EMBL" id="CP002688">
    <property type="protein sequence ID" value="AED94800.1"/>
    <property type="molecule type" value="Genomic_DNA"/>
</dbReference>
<dbReference type="EMBL" id="AY143953">
    <property type="protein sequence ID" value="AAN28892.1"/>
    <property type="molecule type" value="mRNA"/>
</dbReference>
<dbReference type="EMBL" id="AF367282">
    <property type="protein sequence ID" value="AAK56271.1"/>
    <property type="molecule type" value="mRNA"/>
</dbReference>
<dbReference type="EMBL" id="AY086733">
    <property type="protein sequence ID" value="AAM63784.1"/>
    <property type="molecule type" value="mRNA"/>
</dbReference>
<dbReference type="RefSeq" id="NP_199051.1">
    <property type="nucleotide sequence ID" value="NM_123601.4"/>
</dbReference>
<dbReference type="SMR" id="Q9FII1"/>
<dbReference type="FunCoup" id="Q9FII1">
    <property type="interactions" value="1063"/>
</dbReference>
<dbReference type="STRING" id="3702.Q9FII1"/>
<dbReference type="PaxDb" id="3702-AT5G42360.1"/>
<dbReference type="EnsemblPlants" id="AT5G42360.1">
    <property type="protein sequence ID" value="AT5G42360.1"/>
    <property type="gene ID" value="AT5G42360"/>
</dbReference>
<dbReference type="GeneID" id="834242"/>
<dbReference type="Gramene" id="AT5G42360.1">
    <property type="protein sequence ID" value="AT5G42360.1"/>
    <property type="gene ID" value="AT5G42360"/>
</dbReference>
<dbReference type="KEGG" id="ath:AT5G42360"/>
<dbReference type="Araport" id="AT5G42360"/>
<dbReference type="TAIR" id="AT5G42360">
    <property type="gene designation" value="CFK2"/>
</dbReference>
<dbReference type="eggNOG" id="ENOG502QQKY">
    <property type="taxonomic scope" value="Eukaryota"/>
</dbReference>
<dbReference type="HOGENOM" id="CLU_033597_0_0_1"/>
<dbReference type="InParanoid" id="Q9FII1"/>
<dbReference type="OMA" id="WHTISSE"/>
<dbReference type="PhylomeDB" id="Q9FII1"/>
<dbReference type="PRO" id="PR:Q9FII1"/>
<dbReference type="Proteomes" id="UP000006548">
    <property type="component" value="Chromosome 5"/>
</dbReference>
<dbReference type="ExpressionAtlas" id="Q9FII1">
    <property type="expression patterns" value="baseline and differential"/>
</dbReference>
<dbReference type="FunFam" id="1.20.1280.50:FF:000151">
    <property type="entry name" value="F-box/kelch-repeat protein At5g42360"/>
    <property type="match status" value="1"/>
</dbReference>
<dbReference type="FunFam" id="2.120.10.80:FF:000103">
    <property type="entry name" value="F-box/kelch-repeat protein At5g42360"/>
    <property type="match status" value="1"/>
</dbReference>
<dbReference type="FunFam" id="2.120.10.80:FF:000174">
    <property type="entry name" value="F-box/kelch-repeat protein At5g42360"/>
    <property type="match status" value="1"/>
</dbReference>
<dbReference type="Gene3D" id="1.20.1280.50">
    <property type="match status" value="1"/>
</dbReference>
<dbReference type="Gene3D" id="2.120.10.80">
    <property type="entry name" value="Kelch-type beta propeller"/>
    <property type="match status" value="2"/>
</dbReference>
<dbReference type="InterPro" id="IPR036047">
    <property type="entry name" value="F-box-like_dom_sf"/>
</dbReference>
<dbReference type="InterPro" id="IPR001810">
    <property type="entry name" value="F-box_dom"/>
</dbReference>
<dbReference type="InterPro" id="IPR015915">
    <property type="entry name" value="Kelch-typ_b-propeller"/>
</dbReference>
<dbReference type="InterPro" id="IPR006652">
    <property type="entry name" value="Kelch_1"/>
</dbReference>
<dbReference type="PANTHER" id="PTHR47712">
    <property type="entry name" value="OS09G0555300 PROTEIN"/>
    <property type="match status" value="1"/>
</dbReference>
<dbReference type="PANTHER" id="PTHR47712:SF1">
    <property type="entry name" value="OS09G0555300 PROTEIN"/>
    <property type="match status" value="1"/>
</dbReference>
<dbReference type="Pfam" id="PF00646">
    <property type="entry name" value="F-box"/>
    <property type="match status" value="1"/>
</dbReference>
<dbReference type="Pfam" id="PF13964">
    <property type="entry name" value="Kelch_6"/>
    <property type="match status" value="1"/>
</dbReference>
<dbReference type="SMART" id="SM00256">
    <property type="entry name" value="FBOX"/>
    <property type="match status" value="1"/>
</dbReference>
<dbReference type="SMART" id="SM00612">
    <property type="entry name" value="Kelch"/>
    <property type="match status" value="2"/>
</dbReference>
<dbReference type="SUPFAM" id="SSF81383">
    <property type="entry name" value="F-box domain"/>
    <property type="match status" value="1"/>
</dbReference>
<dbReference type="SUPFAM" id="SSF117281">
    <property type="entry name" value="Kelch motif"/>
    <property type="match status" value="1"/>
</dbReference>
<dbReference type="PROSITE" id="PS50181">
    <property type="entry name" value="FBOX"/>
    <property type="match status" value="1"/>
</dbReference>
<keyword id="KW-0880">Kelch repeat</keyword>
<keyword id="KW-1185">Reference proteome</keyword>
<keyword id="KW-0677">Repeat</keyword>
<accession>Q9FII1</accession>
<accession>Q8LC89</accession>